<geneLocation type="chloroplast"/>
<organism>
    <name type="scientific">Mesostigma viride</name>
    <name type="common">Green alga</name>
    <dbReference type="NCBI Taxonomy" id="41882"/>
    <lineage>
        <taxon>Eukaryota</taxon>
        <taxon>Viridiplantae</taxon>
        <taxon>Streptophyta</taxon>
        <taxon>Mesostigmatophyceae</taxon>
        <taxon>Mesostigmatales</taxon>
        <taxon>Mesostigmataceae</taxon>
        <taxon>Mesostigma</taxon>
    </lineage>
</organism>
<name>NU4LC_MESVI</name>
<accession>Q9MUL4</accession>
<dbReference type="EC" id="7.1.1.-" evidence="1"/>
<dbReference type="EMBL" id="AF166114">
    <property type="protein sequence ID" value="AAF43884.1"/>
    <property type="molecule type" value="Genomic_DNA"/>
</dbReference>
<dbReference type="RefSeq" id="NP_038446.1">
    <property type="nucleotide sequence ID" value="NC_002186.1"/>
</dbReference>
<dbReference type="SMR" id="Q9MUL4"/>
<dbReference type="GeneID" id="800893"/>
<dbReference type="GO" id="GO:0009535">
    <property type="term" value="C:chloroplast thylakoid membrane"/>
    <property type="evidence" value="ECO:0007669"/>
    <property type="project" value="UniProtKB-SubCell"/>
</dbReference>
<dbReference type="GO" id="GO:0030964">
    <property type="term" value="C:NADH dehydrogenase complex"/>
    <property type="evidence" value="ECO:0007669"/>
    <property type="project" value="TreeGrafter"/>
</dbReference>
<dbReference type="GO" id="GO:0016655">
    <property type="term" value="F:oxidoreductase activity, acting on NAD(P)H, quinone or similar compound as acceptor"/>
    <property type="evidence" value="ECO:0007669"/>
    <property type="project" value="UniProtKB-UniRule"/>
</dbReference>
<dbReference type="GO" id="GO:0048038">
    <property type="term" value="F:quinone binding"/>
    <property type="evidence" value="ECO:0007669"/>
    <property type="project" value="UniProtKB-KW"/>
</dbReference>
<dbReference type="GO" id="GO:0042773">
    <property type="term" value="P:ATP synthesis coupled electron transport"/>
    <property type="evidence" value="ECO:0007669"/>
    <property type="project" value="InterPro"/>
</dbReference>
<dbReference type="GO" id="GO:0019684">
    <property type="term" value="P:photosynthesis, light reaction"/>
    <property type="evidence" value="ECO:0007669"/>
    <property type="project" value="UniProtKB-UniRule"/>
</dbReference>
<dbReference type="FunFam" id="1.10.287.3510:FF:000001">
    <property type="entry name" value="NADH-quinone oxidoreductase subunit K"/>
    <property type="match status" value="1"/>
</dbReference>
<dbReference type="Gene3D" id="1.10.287.3510">
    <property type="match status" value="1"/>
</dbReference>
<dbReference type="HAMAP" id="MF_01456">
    <property type="entry name" value="NDH1_NuoK"/>
    <property type="match status" value="1"/>
</dbReference>
<dbReference type="InterPro" id="IPR001133">
    <property type="entry name" value="NADH_UbQ_OxRdtase_chain4L/K"/>
</dbReference>
<dbReference type="InterPro" id="IPR039428">
    <property type="entry name" value="NUOK/Mnh_C1-like"/>
</dbReference>
<dbReference type="NCBIfam" id="NF004320">
    <property type="entry name" value="PRK05715.1-2"/>
    <property type="match status" value="1"/>
</dbReference>
<dbReference type="NCBIfam" id="NF004321">
    <property type="entry name" value="PRK05715.1-3"/>
    <property type="match status" value="1"/>
</dbReference>
<dbReference type="NCBIfam" id="NF004322">
    <property type="entry name" value="PRK05715.1-4"/>
    <property type="match status" value="1"/>
</dbReference>
<dbReference type="NCBIfam" id="NF004323">
    <property type="entry name" value="PRK05715.1-5"/>
    <property type="match status" value="1"/>
</dbReference>
<dbReference type="PANTHER" id="PTHR11434:SF16">
    <property type="entry name" value="NADH-UBIQUINONE OXIDOREDUCTASE CHAIN 4L"/>
    <property type="match status" value="1"/>
</dbReference>
<dbReference type="PANTHER" id="PTHR11434">
    <property type="entry name" value="NADH-UBIQUINONE OXIDOREDUCTASE SUBUNIT ND4L"/>
    <property type="match status" value="1"/>
</dbReference>
<dbReference type="Pfam" id="PF00420">
    <property type="entry name" value="Oxidored_q2"/>
    <property type="match status" value="1"/>
</dbReference>
<protein>
    <recommendedName>
        <fullName evidence="1">NAD(P)H-quinone oxidoreductase subunit 4L, chloroplastic</fullName>
        <ecNumber evidence="1">7.1.1.-</ecNumber>
    </recommendedName>
    <alternativeName>
        <fullName evidence="1">NAD(P)H dehydrogenase subunit 4L</fullName>
    </alternativeName>
    <alternativeName>
        <fullName evidence="1">NADH-plastoquinone oxidoreductase subunit 4L</fullName>
    </alternativeName>
</protein>
<gene>
    <name evidence="1" type="primary">ndhE</name>
</gene>
<keyword id="KW-0150">Chloroplast</keyword>
<keyword id="KW-0472">Membrane</keyword>
<keyword id="KW-0520">NAD</keyword>
<keyword id="KW-0521">NADP</keyword>
<keyword id="KW-0934">Plastid</keyword>
<keyword id="KW-0618">Plastoquinone</keyword>
<keyword id="KW-0874">Quinone</keyword>
<keyword id="KW-0793">Thylakoid</keyword>
<keyword id="KW-1278">Translocase</keyword>
<keyword id="KW-0812">Transmembrane</keyword>
<keyword id="KW-1133">Transmembrane helix</keyword>
<keyword id="KW-0813">Transport</keyword>
<sequence length="101" mass="11296">MYIENFLLLASALFCIGIYGLLTSRNIVRVLMCLELCLNAININFIAFSNFIDYEKINGQVIAIFIMTIAAAEAAIGLALVLTIYRNRETVDIENFDLLKG</sequence>
<feature type="chain" id="PRO_0000118510" description="NAD(P)H-quinone oxidoreductase subunit 4L, chloroplastic">
    <location>
        <begin position="1"/>
        <end position="101"/>
    </location>
</feature>
<feature type="transmembrane region" description="Helical" evidence="1">
    <location>
        <begin position="2"/>
        <end position="22"/>
    </location>
</feature>
<feature type="transmembrane region" description="Helical" evidence="1">
    <location>
        <begin position="32"/>
        <end position="52"/>
    </location>
</feature>
<feature type="transmembrane region" description="Helical" evidence="1">
    <location>
        <begin position="61"/>
        <end position="81"/>
    </location>
</feature>
<proteinExistence type="inferred from homology"/>
<reference key="1">
    <citation type="journal article" date="2000" name="Nature">
        <title>Ancestral chloroplast genome in Mesostigma viride reveals an early branch of green plant evolution.</title>
        <authorList>
            <person name="Lemieux C."/>
            <person name="Otis C."/>
            <person name="Turmel M."/>
        </authorList>
    </citation>
    <scope>NUCLEOTIDE SEQUENCE [LARGE SCALE GENOMIC DNA]</scope>
    <source>
        <strain>NIES-296 / KY-14 / CCMP 2046</strain>
    </source>
</reference>
<evidence type="ECO:0000255" key="1">
    <source>
        <dbReference type="HAMAP-Rule" id="MF_01456"/>
    </source>
</evidence>
<comment type="function">
    <text evidence="1">NDH shuttles electrons from NAD(P)H:plastoquinone, via FMN and iron-sulfur (Fe-S) centers, to quinones in the photosynthetic chain and possibly in a chloroplast respiratory chain. The immediate electron acceptor for the enzyme in this species is believed to be plastoquinone. Couples the redox reaction to proton translocation, and thus conserves the redox energy in a proton gradient.</text>
</comment>
<comment type="catalytic activity">
    <reaction evidence="1">
        <text>a plastoquinone + NADH + (n+1) H(+)(in) = a plastoquinol + NAD(+) + n H(+)(out)</text>
        <dbReference type="Rhea" id="RHEA:42608"/>
        <dbReference type="Rhea" id="RHEA-COMP:9561"/>
        <dbReference type="Rhea" id="RHEA-COMP:9562"/>
        <dbReference type="ChEBI" id="CHEBI:15378"/>
        <dbReference type="ChEBI" id="CHEBI:17757"/>
        <dbReference type="ChEBI" id="CHEBI:57540"/>
        <dbReference type="ChEBI" id="CHEBI:57945"/>
        <dbReference type="ChEBI" id="CHEBI:62192"/>
    </reaction>
</comment>
<comment type="catalytic activity">
    <reaction evidence="1">
        <text>a plastoquinone + NADPH + (n+1) H(+)(in) = a plastoquinol + NADP(+) + n H(+)(out)</text>
        <dbReference type="Rhea" id="RHEA:42612"/>
        <dbReference type="Rhea" id="RHEA-COMP:9561"/>
        <dbReference type="Rhea" id="RHEA-COMP:9562"/>
        <dbReference type="ChEBI" id="CHEBI:15378"/>
        <dbReference type="ChEBI" id="CHEBI:17757"/>
        <dbReference type="ChEBI" id="CHEBI:57783"/>
        <dbReference type="ChEBI" id="CHEBI:58349"/>
        <dbReference type="ChEBI" id="CHEBI:62192"/>
    </reaction>
</comment>
<comment type="subunit">
    <text evidence="1">NDH is composed of at least 16 different subunits, 5 of which are encoded in the nucleus.</text>
</comment>
<comment type="subcellular location">
    <subcellularLocation>
        <location evidence="1">Plastid</location>
        <location evidence="1">Chloroplast thylakoid membrane</location>
        <topology evidence="1">Multi-pass membrane protein</topology>
    </subcellularLocation>
</comment>
<comment type="similarity">
    <text evidence="1">Belongs to the complex I subunit 4L family.</text>
</comment>